<sequence>MQARYSVSSPNSLGVVPYLGGEQSYYRAAAAAAGGGYTAMPAPMSVYSHPAHAEQYPGSMARAYGPYTPQPQPKDMVKPPYSYIALITMAIQNAPDKKITLNGIYQFIMDRFPFYRDNKQGWQNSIRHNLSLNECFVKVPRDDKKPGKGSYWTLDPDSYNMFENGSFLRRRRRFKKKDAVKDKEEKGRLHLQEPPPPQAGRQPAPAPPEQAEGSAPGPQPPPVRIQDIKTENGTCPSPPQPLSPAAALGSGSAATVPKIESPDSSSSSLSSGSSPPGSLPSARPLSLDAAEPAPPPQPAPPPHHSQGFSVDNIMTSLRGSPQGSAAELGSGLLASAAASSRAGIAPPLALGAYSPGQSSLYSSPCSQSSSAGSSGGGGGGGGGGGGSSSAAGTGGAATYHCNLQAMSLYAAGERGGHLQGPAGGAGSAAVDDPLPDYSLPPATSSSSSSLSHGGGGQEASHHPASHQGRLTSWYLNQAGGDLGHLASAAAAAAAAGYPGQQQNFHSVREMFESQRIGLNNSPVNGNSSCQMAFPASQSLYRTSGAFVYDCSKF</sequence>
<organism>
    <name type="scientific">Mus musculus</name>
    <name type="common">Mouse</name>
    <dbReference type="NCBI Taxonomy" id="10090"/>
    <lineage>
        <taxon>Eukaryota</taxon>
        <taxon>Metazoa</taxon>
        <taxon>Chordata</taxon>
        <taxon>Craniata</taxon>
        <taxon>Vertebrata</taxon>
        <taxon>Euteleostomi</taxon>
        <taxon>Mammalia</taxon>
        <taxon>Eutheria</taxon>
        <taxon>Euarchontoglires</taxon>
        <taxon>Glires</taxon>
        <taxon>Rodentia</taxon>
        <taxon>Myomorpha</taxon>
        <taxon>Muroidea</taxon>
        <taxon>Muridae</taxon>
        <taxon>Murinae</taxon>
        <taxon>Mus</taxon>
        <taxon>Mus</taxon>
    </lineage>
</organism>
<feature type="chain" id="PRO_0000091807" description="Forkhead box protein C1">
    <location>
        <begin position="1"/>
        <end position="553"/>
    </location>
</feature>
<feature type="DNA-binding region" description="Fork-head" evidence="2">
    <location>
        <begin position="77"/>
        <end position="168"/>
    </location>
</feature>
<feature type="region of interest" description="Required for transcriptional activation" evidence="1">
    <location>
        <begin position="1"/>
        <end position="51"/>
    </location>
</feature>
<feature type="region of interest" description="Disordered" evidence="3">
    <location>
        <begin position="173"/>
        <end position="326"/>
    </location>
</feature>
<feature type="region of interest" description="Required for transcriptional inhibition" evidence="1">
    <location>
        <begin position="217"/>
        <end position="366"/>
    </location>
</feature>
<feature type="region of interest" description="Disordered" evidence="3">
    <location>
        <begin position="356"/>
        <end position="393"/>
    </location>
</feature>
<feature type="region of interest" description="Disordered" evidence="3">
    <location>
        <begin position="420"/>
        <end position="466"/>
    </location>
</feature>
<feature type="region of interest" description="Required for transcriptional activation" evidence="1">
    <location>
        <begin position="466"/>
        <end position="553"/>
    </location>
</feature>
<feature type="short sequence motif" description="Nuclear localization signal 1 (NLS 1)" evidence="1">
    <location>
        <begin position="78"/>
        <end position="93"/>
    </location>
</feature>
<feature type="short sequence motif" description="Nuclear localization signal 2 (NLS 2)" evidence="1">
    <location>
        <begin position="168"/>
        <end position="176"/>
    </location>
</feature>
<feature type="compositionally biased region" description="Basic and acidic residues" evidence="3">
    <location>
        <begin position="177"/>
        <end position="191"/>
    </location>
</feature>
<feature type="compositionally biased region" description="Pro residues" evidence="3">
    <location>
        <begin position="193"/>
        <end position="208"/>
    </location>
</feature>
<feature type="compositionally biased region" description="Low complexity" evidence="3">
    <location>
        <begin position="243"/>
        <end position="254"/>
    </location>
</feature>
<feature type="compositionally biased region" description="Low complexity" evidence="3">
    <location>
        <begin position="262"/>
        <end position="291"/>
    </location>
</feature>
<feature type="compositionally biased region" description="Pro residues" evidence="3">
    <location>
        <begin position="292"/>
        <end position="303"/>
    </location>
</feature>
<feature type="compositionally biased region" description="Polar residues" evidence="3">
    <location>
        <begin position="306"/>
        <end position="322"/>
    </location>
</feature>
<feature type="compositionally biased region" description="Low complexity" evidence="3">
    <location>
        <begin position="356"/>
        <end position="372"/>
    </location>
</feature>
<feature type="compositionally biased region" description="Gly residues" evidence="3">
    <location>
        <begin position="373"/>
        <end position="393"/>
    </location>
</feature>
<feature type="modified residue" description="Phosphoserine" evidence="13 22">
    <location>
        <position position="237"/>
    </location>
</feature>
<feature type="modified residue" description="Phosphoserine" evidence="13 22">
    <location>
        <position position="243"/>
    </location>
</feature>
<feature type="modified residue" description="Phosphoserine" evidence="1">
    <location>
        <position position="274"/>
    </location>
</feature>
<feature type="modified residue" description="Phosphoserine" evidence="13">
    <location>
        <position position="320"/>
    </location>
</feature>
<feature type="modified residue" description="Phosphoserine" evidence="13">
    <location>
        <position position="521"/>
    </location>
</feature>
<feature type="mutagenesis site" description="No effect on sumoylation; when associated with A-237; A-243; A-320 and A-521." evidence="13">
    <original>SVSS</original>
    <variation>AVAA</variation>
    <location>
        <begin position="6"/>
        <end position="9"/>
    </location>
</feature>
<feature type="mutagenesis site" description="Inhibits interaction with GLI2. Decreased nuclear colocalization with GLI2. No effect on DNA-binding. Decreased Ihh-induced transcriptional activity and transcription coactivator activity with GLI2." evidence="15">
    <original>F</original>
    <variation>S</variation>
    <location>
        <position position="112"/>
    </location>
</feature>
<feature type="mutagenesis site" description="No effect on protein stability, inhibited sumoylation, increased transcriptional activity; when associated with R-258." evidence="13">
    <original>K</original>
    <variation>R</variation>
    <location>
        <position position="229"/>
    </location>
</feature>
<feature type="mutagenesis site" description="No effect on sumoylation; when associated with 6-A--A-9; A-243; A-320 and A-521." evidence="13">
    <original>S</original>
    <variation>A</variation>
    <location>
        <position position="237"/>
    </location>
</feature>
<feature type="mutagenesis site" description="No effect on sumoylation; when associated with 6-A--A-9; A-237; A-320 and A-521." evidence="13">
    <original>S</original>
    <variation>A</variation>
    <location>
        <position position="243"/>
    </location>
</feature>
<feature type="mutagenesis site" description="No effect on protein stability, inhibited sumoylation, increased transcriptional activity; when associated with R-229." evidence="13">
    <original>K</original>
    <variation>R</variation>
    <location>
        <position position="258"/>
    </location>
</feature>
<feature type="mutagenesis site" description="No effect on sumoylation; when associated with 6-A--A-9; A-237; A-243 and A-521." evidence="13">
    <original>S</original>
    <variation>A</variation>
    <location>
        <position position="320"/>
    </location>
</feature>
<feature type="mutagenesis site" description="No effect on sumoylation; when associated with 6-A--A-9; A-237; A-243 and A-320." evidence="13">
    <original>S</original>
    <variation>A</variation>
    <location>
        <position position="521"/>
    </location>
</feature>
<feature type="sequence conflict" description="In Ref. 6; AAA03159." evidence="21" ref="6">
    <original>VKDKEEK</original>
    <variation>KKEITFI</variation>
    <location>
        <begin position="180"/>
        <end position="186"/>
    </location>
</feature>
<feature type="sequence conflict" description="In Ref. 1; AAC24209." evidence="21" ref="1">
    <original>G</original>
    <variation>A</variation>
    <location>
        <position position="496"/>
    </location>
</feature>
<proteinExistence type="evidence at protein level"/>
<dbReference type="EMBL" id="AF045017">
    <property type="protein sequence ID" value="AAC24209.1"/>
    <property type="molecule type" value="mRNA"/>
</dbReference>
<dbReference type="EMBL" id="AJ223298">
    <property type="protein sequence ID" value="CAA11239.1"/>
    <property type="molecule type" value="Genomic_DNA"/>
</dbReference>
<dbReference type="EMBL" id="AK144420">
    <property type="protein sequence ID" value="BAE25882.1"/>
    <property type="molecule type" value="mRNA"/>
</dbReference>
<dbReference type="EMBL" id="BC052011">
    <property type="protein sequence ID" value="AAH52011.1"/>
    <property type="molecule type" value="mRNA"/>
</dbReference>
<dbReference type="EMBL" id="X71939">
    <property type="protein sequence ID" value="CAA50741.1"/>
    <property type="molecule type" value="Genomic_DNA"/>
</dbReference>
<dbReference type="EMBL" id="L10406">
    <property type="protein sequence ID" value="AAA03159.1"/>
    <property type="molecule type" value="mRNA"/>
</dbReference>
<dbReference type="CCDS" id="CCDS26425.1"/>
<dbReference type="PIR" id="I49674">
    <property type="entry name" value="I49674"/>
</dbReference>
<dbReference type="RefSeq" id="NP_032618.2">
    <property type="nucleotide sequence ID" value="NM_008592.2"/>
</dbReference>
<dbReference type="SMR" id="Q61572"/>
<dbReference type="FunCoup" id="Q61572">
    <property type="interactions" value="1078"/>
</dbReference>
<dbReference type="IntAct" id="Q61572">
    <property type="interactions" value="3"/>
</dbReference>
<dbReference type="MINT" id="Q61572"/>
<dbReference type="STRING" id="10090.ENSMUSP00000052196"/>
<dbReference type="GlyGen" id="Q61572">
    <property type="glycosylation" value="1 site, 1 O-linked glycan (1 site)"/>
</dbReference>
<dbReference type="iPTMnet" id="Q61572"/>
<dbReference type="PhosphoSitePlus" id="Q61572"/>
<dbReference type="PaxDb" id="10090-ENSMUSP00000052196"/>
<dbReference type="ProteomicsDB" id="267511"/>
<dbReference type="Antibodypedia" id="9213">
    <property type="antibodies" value="403 antibodies from 40 providers"/>
</dbReference>
<dbReference type="DNASU" id="17300"/>
<dbReference type="Ensembl" id="ENSMUST00000062292.5">
    <property type="protein sequence ID" value="ENSMUSP00000052196.3"/>
    <property type="gene ID" value="ENSMUSG00000050295.5"/>
</dbReference>
<dbReference type="GeneID" id="17300"/>
<dbReference type="KEGG" id="mmu:17300"/>
<dbReference type="UCSC" id="uc007pzp.1">
    <property type="organism name" value="mouse"/>
</dbReference>
<dbReference type="AGR" id="MGI:1347466"/>
<dbReference type="CTD" id="2296"/>
<dbReference type="MGI" id="MGI:1347466">
    <property type="gene designation" value="Foxc1"/>
</dbReference>
<dbReference type="VEuPathDB" id="HostDB:ENSMUSG00000050295"/>
<dbReference type="eggNOG" id="KOG2294">
    <property type="taxonomic scope" value="Eukaryota"/>
</dbReference>
<dbReference type="GeneTree" id="ENSGT00940000162303"/>
<dbReference type="HOGENOM" id="CLU_035722_3_0_1"/>
<dbReference type="InParanoid" id="Q61572"/>
<dbReference type="OMA" id="TSWYLNQ"/>
<dbReference type="OrthoDB" id="5954824at2759"/>
<dbReference type="PhylomeDB" id="Q61572"/>
<dbReference type="TreeFam" id="TF316127"/>
<dbReference type="BioGRID-ORCS" id="17300">
    <property type="hits" value="3 hits in 77 CRISPR screens"/>
</dbReference>
<dbReference type="ChiTaRS" id="Foxc1">
    <property type="organism name" value="mouse"/>
</dbReference>
<dbReference type="PRO" id="PR:Q61572"/>
<dbReference type="Proteomes" id="UP000000589">
    <property type="component" value="Chromosome 13"/>
</dbReference>
<dbReference type="RNAct" id="Q61572">
    <property type="molecule type" value="protein"/>
</dbReference>
<dbReference type="Bgee" id="ENSMUSG00000050295">
    <property type="expression patterns" value="Expressed in parotid gland and 278 other cell types or tissues"/>
</dbReference>
<dbReference type="GO" id="GO:0005829">
    <property type="term" value="C:cytosol"/>
    <property type="evidence" value="ECO:0007669"/>
    <property type="project" value="Ensembl"/>
</dbReference>
<dbReference type="GO" id="GO:0000792">
    <property type="term" value="C:heterochromatin"/>
    <property type="evidence" value="ECO:0000250"/>
    <property type="project" value="UniProtKB"/>
</dbReference>
<dbReference type="GO" id="GO:0005654">
    <property type="term" value="C:nucleoplasm"/>
    <property type="evidence" value="ECO:0007669"/>
    <property type="project" value="Ensembl"/>
</dbReference>
<dbReference type="GO" id="GO:0005634">
    <property type="term" value="C:nucleus"/>
    <property type="evidence" value="ECO:0000314"/>
    <property type="project" value="UniProtKB"/>
</dbReference>
<dbReference type="GO" id="GO:0003677">
    <property type="term" value="F:DNA binding"/>
    <property type="evidence" value="ECO:0000250"/>
    <property type="project" value="UniProtKB"/>
</dbReference>
<dbReference type="GO" id="GO:0008301">
    <property type="term" value="F:DNA binding, bending"/>
    <property type="evidence" value="ECO:0000250"/>
    <property type="project" value="UniProtKB"/>
</dbReference>
<dbReference type="GO" id="GO:0001228">
    <property type="term" value="F:DNA-binding transcription activator activity, RNA polymerase II-specific"/>
    <property type="evidence" value="ECO:0000314"/>
    <property type="project" value="GO_Central"/>
</dbReference>
<dbReference type="GO" id="GO:0003700">
    <property type="term" value="F:DNA-binding transcription factor activity"/>
    <property type="evidence" value="ECO:0000314"/>
    <property type="project" value="BHF-UCL"/>
</dbReference>
<dbReference type="GO" id="GO:0000981">
    <property type="term" value="F:DNA-binding transcription factor activity, RNA polymerase II-specific"/>
    <property type="evidence" value="ECO:0000314"/>
    <property type="project" value="MGI"/>
</dbReference>
<dbReference type="GO" id="GO:0140297">
    <property type="term" value="F:DNA-binding transcription factor binding"/>
    <property type="evidence" value="ECO:0000250"/>
    <property type="project" value="UniProtKB"/>
</dbReference>
<dbReference type="GO" id="GO:1990841">
    <property type="term" value="F:promoter-specific chromatin binding"/>
    <property type="evidence" value="ECO:0000314"/>
    <property type="project" value="UniProtKB"/>
</dbReference>
<dbReference type="GO" id="GO:0000978">
    <property type="term" value="F:RNA polymerase II cis-regulatory region sequence-specific DNA binding"/>
    <property type="evidence" value="ECO:0000314"/>
    <property type="project" value="GO_Central"/>
</dbReference>
<dbReference type="GO" id="GO:0061629">
    <property type="term" value="F:RNA polymerase II-specific DNA-binding transcription factor binding"/>
    <property type="evidence" value="ECO:0007669"/>
    <property type="project" value="Ensembl"/>
</dbReference>
<dbReference type="GO" id="GO:0043565">
    <property type="term" value="F:sequence-specific DNA binding"/>
    <property type="evidence" value="ECO:0000250"/>
    <property type="project" value="UniProtKB"/>
</dbReference>
<dbReference type="GO" id="GO:0000976">
    <property type="term" value="F:transcription cis-regulatory region binding"/>
    <property type="evidence" value="ECO:0000314"/>
    <property type="project" value="BHF-UCL"/>
</dbReference>
<dbReference type="GO" id="GO:0001525">
    <property type="term" value="P:angiogenesis"/>
    <property type="evidence" value="ECO:0007669"/>
    <property type="project" value="UniProtKB-KW"/>
</dbReference>
<dbReference type="GO" id="GO:0003275">
    <property type="term" value="P:apoptotic process involved in outflow tract morphogenesis"/>
    <property type="evidence" value="ECO:0000316"/>
    <property type="project" value="MGI"/>
</dbReference>
<dbReference type="GO" id="GO:0048844">
    <property type="term" value="P:artery morphogenesis"/>
    <property type="evidence" value="ECO:0000315"/>
    <property type="project" value="MGI"/>
</dbReference>
<dbReference type="GO" id="GO:0001568">
    <property type="term" value="P:blood vessel development"/>
    <property type="evidence" value="ECO:0000316"/>
    <property type="project" value="MGI"/>
</dbReference>
<dbReference type="GO" id="GO:0097746">
    <property type="term" value="P:blood vessel diameter maintenance"/>
    <property type="evidence" value="ECO:0000316"/>
    <property type="project" value="MGI"/>
</dbReference>
<dbReference type="GO" id="GO:0001974">
    <property type="term" value="P:blood vessel remodeling"/>
    <property type="evidence" value="ECO:0000316"/>
    <property type="project" value="MGI"/>
</dbReference>
<dbReference type="GO" id="GO:0007420">
    <property type="term" value="P:brain development"/>
    <property type="evidence" value="ECO:0000315"/>
    <property type="project" value="MGI"/>
</dbReference>
<dbReference type="GO" id="GO:0043010">
    <property type="term" value="P:camera-type eye development"/>
    <property type="evidence" value="ECO:0000315"/>
    <property type="project" value="MGI"/>
</dbReference>
<dbReference type="GO" id="GO:0060038">
    <property type="term" value="P:cardiac muscle cell proliferation"/>
    <property type="evidence" value="ECO:0000316"/>
    <property type="project" value="MGI"/>
</dbReference>
<dbReference type="GO" id="GO:0016477">
    <property type="term" value="P:cell migration"/>
    <property type="evidence" value="ECO:0000250"/>
    <property type="project" value="UniProtKB"/>
</dbReference>
<dbReference type="GO" id="GO:0008283">
    <property type="term" value="P:cell population proliferation"/>
    <property type="evidence" value="ECO:0000250"/>
    <property type="project" value="UniProtKB"/>
</dbReference>
<dbReference type="GO" id="GO:1990869">
    <property type="term" value="P:cellular response to chemokine"/>
    <property type="evidence" value="ECO:0000315"/>
    <property type="project" value="UniProtKB"/>
</dbReference>
<dbReference type="GO" id="GO:0071364">
    <property type="term" value="P:cellular response to epidermal growth factor stimulus"/>
    <property type="evidence" value="ECO:0000250"/>
    <property type="project" value="UniProtKB"/>
</dbReference>
<dbReference type="GO" id="GO:0021549">
    <property type="term" value="P:cerebellum development"/>
    <property type="evidence" value="ECO:0000315"/>
    <property type="project" value="UniProtKB"/>
</dbReference>
<dbReference type="GO" id="GO:0070098">
    <property type="term" value="P:chemokine-mediated signaling pathway"/>
    <property type="evidence" value="ECO:0000315"/>
    <property type="project" value="UniProtKB"/>
</dbReference>
<dbReference type="GO" id="GO:0030199">
    <property type="term" value="P:collagen fibril organization"/>
    <property type="evidence" value="ECO:0000315"/>
    <property type="project" value="MGI"/>
</dbReference>
<dbReference type="GO" id="GO:0035050">
    <property type="term" value="P:embryonic heart tube development"/>
    <property type="evidence" value="ECO:0000316"/>
    <property type="project" value="MGI"/>
</dbReference>
<dbReference type="GO" id="GO:0001958">
    <property type="term" value="P:endochondral ossification"/>
    <property type="evidence" value="ECO:0000315"/>
    <property type="project" value="UniProtKB"/>
</dbReference>
<dbReference type="GO" id="GO:0001654">
    <property type="term" value="P:eye development"/>
    <property type="evidence" value="ECO:0000315"/>
    <property type="project" value="MGI"/>
</dbReference>
<dbReference type="GO" id="GO:0008354">
    <property type="term" value="P:germ cell migration"/>
    <property type="evidence" value="ECO:0000315"/>
    <property type="project" value="MGI"/>
</dbReference>
<dbReference type="GO" id="GO:0072010">
    <property type="term" value="P:glomerular epithelium development"/>
    <property type="evidence" value="ECO:0000315"/>
    <property type="project" value="UniProtKB"/>
</dbReference>
<dbReference type="GO" id="GO:0030203">
    <property type="term" value="P:glycosaminoglycan metabolic process"/>
    <property type="evidence" value="ECO:0000315"/>
    <property type="project" value="MGI"/>
</dbReference>
<dbReference type="GO" id="GO:0007507">
    <property type="term" value="P:heart development"/>
    <property type="evidence" value="ECO:0000315"/>
    <property type="project" value="MGI"/>
</dbReference>
<dbReference type="GO" id="GO:0003007">
    <property type="term" value="P:heart morphogenesis"/>
    <property type="evidence" value="ECO:0000316"/>
    <property type="project" value="MGI"/>
</dbReference>
<dbReference type="GO" id="GO:0001701">
    <property type="term" value="P:in utero embryonic development"/>
    <property type="evidence" value="ECO:0000315"/>
    <property type="project" value="MGI"/>
</dbReference>
<dbReference type="GO" id="GO:0001822">
    <property type="term" value="P:kidney development"/>
    <property type="evidence" value="ECO:0000315"/>
    <property type="project" value="MGI"/>
</dbReference>
<dbReference type="GO" id="GO:0032808">
    <property type="term" value="P:lacrimal gland development"/>
    <property type="evidence" value="ECO:0000315"/>
    <property type="project" value="MGI"/>
</dbReference>
<dbReference type="GO" id="GO:0001945">
    <property type="term" value="P:lymph vessel development"/>
    <property type="evidence" value="ECO:0000316"/>
    <property type="project" value="MGI"/>
</dbReference>
<dbReference type="GO" id="GO:0036438">
    <property type="term" value="P:maintenance of lens transparency"/>
    <property type="evidence" value="ECO:0000315"/>
    <property type="project" value="UniProtKB"/>
</dbReference>
<dbReference type="GO" id="GO:0014031">
    <property type="term" value="P:mesenchymal cell development"/>
    <property type="evidence" value="ECO:0000314"/>
    <property type="project" value="UniProtKB"/>
</dbReference>
<dbReference type="GO" id="GO:0048762">
    <property type="term" value="P:mesenchymal cell differentiation"/>
    <property type="evidence" value="ECO:0000315"/>
    <property type="project" value="MGI"/>
</dbReference>
<dbReference type="GO" id="GO:0016525">
    <property type="term" value="P:negative regulation of angiogenesis"/>
    <property type="evidence" value="ECO:0000315"/>
    <property type="project" value="UniProtKB"/>
</dbReference>
<dbReference type="GO" id="GO:1902257">
    <property type="term" value="P:negative regulation of apoptotic process involved in outflow tract morphogenesis"/>
    <property type="evidence" value="ECO:0000316"/>
    <property type="project" value="MGI"/>
</dbReference>
<dbReference type="GO" id="GO:1901491">
    <property type="term" value="P:negative regulation of lymphangiogenesis"/>
    <property type="evidence" value="ECO:0000315"/>
    <property type="project" value="UniProtKB"/>
</dbReference>
<dbReference type="GO" id="GO:0045930">
    <property type="term" value="P:negative regulation of mitotic cell cycle"/>
    <property type="evidence" value="ECO:0000250"/>
    <property type="project" value="UniProtKB"/>
</dbReference>
<dbReference type="GO" id="GO:0000122">
    <property type="term" value="P:negative regulation of transcription by RNA polymerase II"/>
    <property type="evidence" value="ECO:0000315"/>
    <property type="project" value="UniProtKB"/>
</dbReference>
<dbReference type="GO" id="GO:0014032">
    <property type="term" value="P:neural crest cell development"/>
    <property type="evidence" value="ECO:0000316"/>
    <property type="project" value="MGI"/>
</dbReference>
<dbReference type="GO" id="GO:0007219">
    <property type="term" value="P:Notch signaling pathway"/>
    <property type="evidence" value="ECO:0000316"/>
    <property type="project" value="MGI"/>
</dbReference>
<dbReference type="GO" id="GO:0042475">
    <property type="term" value="P:odontogenesis of dentin-containing tooth"/>
    <property type="evidence" value="ECO:0000250"/>
    <property type="project" value="UniProtKB"/>
</dbReference>
<dbReference type="GO" id="GO:0001503">
    <property type="term" value="P:ossification"/>
    <property type="evidence" value="ECO:0000315"/>
    <property type="project" value="MGI"/>
</dbReference>
<dbReference type="GO" id="GO:0001541">
    <property type="term" value="P:ovarian follicle development"/>
    <property type="evidence" value="ECO:0000315"/>
    <property type="project" value="MGI"/>
</dbReference>
<dbReference type="GO" id="GO:0048341">
    <property type="term" value="P:paraxial mesoderm formation"/>
    <property type="evidence" value="ECO:0000315"/>
    <property type="project" value="UniProtKB"/>
</dbReference>
<dbReference type="GO" id="GO:1904798">
    <property type="term" value="P:positive regulation of core promoter binding"/>
    <property type="evidence" value="ECO:0000315"/>
    <property type="project" value="UniProtKB"/>
</dbReference>
<dbReference type="GO" id="GO:0043388">
    <property type="term" value="P:positive regulation of DNA binding"/>
    <property type="evidence" value="ECO:0000250"/>
    <property type="project" value="UniProtKB"/>
</dbReference>
<dbReference type="GO" id="GO:0045893">
    <property type="term" value="P:positive regulation of DNA-templated transcription"/>
    <property type="evidence" value="ECO:0000250"/>
    <property type="project" value="UniProtKB"/>
</dbReference>
<dbReference type="GO" id="GO:0010718">
    <property type="term" value="P:positive regulation of epithelial to mesenchymal transition"/>
    <property type="evidence" value="ECO:0000250"/>
    <property type="project" value="UniProtKB"/>
</dbReference>
<dbReference type="GO" id="GO:0010628">
    <property type="term" value="P:positive regulation of gene expression"/>
    <property type="evidence" value="ECO:0000314"/>
    <property type="project" value="UniProtKB"/>
</dbReference>
<dbReference type="GO" id="GO:1901534">
    <property type="term" value="P:positive regulation of hematopoietic progenitor cell differentiation"/>
    <property type="evidence" value="ECO:0000315"/>
    <property type="project" value="UniProtKB"/>
</dbReference>
<dbReference type="GO" id="GO:1902038">
    <property type="term" value="P:positive regulation of hematopoietic stem cell differentiation"/>
    <property type="evidence" value="ECO:0000315"/>
    <property type="project" value="UniProtKB"/>
</dbReference>
<dbReference type="GO" id="GO:0045618">
    <property type="term" value="P:positive regulation of keratinocyte differentiation"/>
    <property type="evidence" value="ECO:0007669"/>
    <property type="project" value="Ensembl"/>
</dbReference>
<dbReference type="GO" id="GO:0045944">
    <property type="term" value="P:positive regulation of transcription by RNA polymerase II"/>
    <property type="evidence" value="ECO:0000314"/>
    <property type="project" value="BHF-UCL"/>
</dbReference>
<dbReference type="GO" id="GO:0006355">
    <property type="term" value="P:regulation of DNA-templated transcription"/>
    <property type="evidence" value="ECO:0000250"/>
    <property type="project" value="UniProtKB"/>
</dbReference>
<dbReference type="GO" id="GO:0046620">
    <property type="term" value="P:regulation of organ growth"/>
    <property type="evidence" value="ECO:0000316"/>
    <property type="project" value="MGI"/>
</dbReference>
<dbReference type="GO" id="GO:0001501">
    <property type="term" value="P:skeletal system development"/>
    <property type="evidence" value="ECO:0000315"/>
    <property type="project" value="MGI"/>
</dbReference>
<dbReference type="GO" id="GO:0001756">
    <property type="term" value="P:somitogenesis"/>
    <property type="evidence" value="ECO:0000316"/>
    <property type="project" value="UniProtKB"/>
</dbReference>
<dbReference type="GO" id="GO:0001657">
    <property type="term" value="P:ureteric bud development"/>
    <property type="evidence" value="ECO:0000315"/>
    <property type="project" value="MGI"/>
</dbReference>
<dbReference type="GO" id="GO:0048010">
    <property type="term" value="P:vascular endothelial growth factor receptor signaling pathway"/>
    <property type="evidence" value="ECO:0000316"/>
    <property type="project" value="MGI"/>
</dbReference>
<dbReference type="GO" id="GO:0038084">
    <property type="term" value="P:vascular endothelial growth factor signaling pathway"/>
    <property type="evidence" value="ECO:0000315"/>
    <property type="project" value="UniProtKB"/>
</dbReference>
<dbReference type="GO" id="GO:0055010">
    <property type="term" value="P:ventricular cardiac muscle tissue morphogenesis"/>
    <property type="evidence" value="ECO:0000316"/>
    <property type="project" value="MGI"/>
</dbReference>
<dbReference type="CDD" id="cd20044">
    <property type="entry name" value="FH_FOXC1"/>
    <property type="match status" value="1"/>
</dbReference>
<dbReference type="FunFam" id="1.10.10.10:FF:000016">
    <property type="entry name" value="Forkhead box protein I1"/>
    <property type="match status" value="1"/>
</dbReference>
<dbReference type="Gene3D" id="1.10.10.10">
    <property type="entry name" value="Winged helix-like DNA-binding domain superfamily/Winged helix DNA-binding domain"/>
    <property type="match status" value="1"/>
</dbReference>
<dbReference type="InterPro" id="IPR001766">
    <property type="entry name" value="Fork_head_dom"/>
</dbReference>
<dbReference type="InterPro" id="IPR050211">
    <property type="entry name" value="FOX_domain-containing"/>
</dbReference>
<dbReference type="InterPro" id="IPR047391">
    <property type="entry name" value="FOXC1/C2-like_FH"/>
</dbReference>
<dbReference type="InterPro" id="IPR018122">
    <property type="entry name" value="TF_fork_head_CS_1"/>
</dbReference>
<dbReference type="InterPro" id="IPR030456">
    <property type="entry name" value="TF_fork_head_CS_2"/>
</dbReference>
<dbReference type="InterPro" id="IPR036388">
    <property type="entry name" value="WH-like_DNA-bd_sf"/>
</dbReference>
<dbReference type="InterPro" id="IPR036390">
    <property type="entry name" value="WH_DNA-bd_sf"/>
</dbReference>
<dbReference type="PANTHER" id="PTHR11829">
    <property type="entry name" value="FORKHEAD BOX PROTEIN"/>
    <property type="match status" value="1"/>
</dbReference>
<dbReference type="PANTHER" id="PTHR11829:SF68">
    <property type="entry name" value="FORKHEAD BOX PROTEIN C1"/>
    <property type="match status" value="1"/>
</dbReference>
<dbReference type="Pfam" id="PF00250">
    <property type="entry name" value="Forkhead"/>
    <property type="match status" value="1"/>
</dbReference>
<dbReference type="PRINTS" id="PR00053">
    <property type="entry name" value="FORKHEAD"/>
</dbReference>
<dbReference type="SMART" id="SM00339">
    <property type="entry name" value="FH"/>
    <property type="match status" value="1"/>
</dbReference>
<dbReference type="SUPFAM" id="SSF46785">
    <property type="entry name" value="Winged helix' DNA-binding domain"/>
    <property type="match status" value="1"/>
</dbReference>
<dbReference type="PROSITE" id="PS00657">
    <property type="entry name" value="FORK_HEAD_1"/>
    <property type="match status" value="1"/>
</dbReference>
<dbReference type="PROSITE" id="PS00658">
    <property type="entry name" value="FORK_HEAD_2"/>
    <property type="match status" value="1"/>
</dbReference>
<dbReference type="PROSITE" id="PS50039">
    <property type="entry name" value="FORK_HEAD_3"/>
    <property type="match status" value="1"/>
</dbReference>
<comment type="function">
    <text evidence="1 4 5 6 7 8 10 11 12 13 14 15 17 18 19">DNA-binding transcriptional factor that plays a role in a broad range of cellular and developmental processes such as eye, bones, cardiovascular, kidney and skin development (PubMed:10395790, PubMed:10479458, PubMed:11562355, PubMed:18187037, PubMed:19668217, PubMed:22493429, PubMed:24590069, PubMed:25808752, PubMed:28223138, PubMed:9106663, PubMed:9635428). Acts either as a transcriptional activator or repressor (PubMed:28223138). Binds to the consensus binding site 5'-[G/C][A/T]AAA[T/C]AA[A/C]-3' in promoter of target genes (PubMed:25808752). Upon DNA-binding, promotes DNA bending. Acts as a transcriptional coactivator (PubMed:25808752). Stimulates Indian hedgehog (Ihh)-induced target gene expression mediated by the transcription factor GLI2, and hence regulates endochondral ossification (PubMed:25808752). Also acts as a transcriptional coregulator by increasing DNA-binding capacity of GLI2 in breast cancer cells. Regulates FOXO1 through binding to a conserved element, 5'-GTAAACAAA-3' in its promoter region, implicating FOXC1 as an important regulator of cell viability and resistance to oxidative stress in the eye (By similarity). Cooperates with transcription factor FOXC2 in regulating expression of genes that maintain podocyte integrity (PubMed:28223138). Promotes cell growth inhibition by stopping the cell cycle in the G1 phase through TGFB1-mediated signals. Involved in epithelial-mesenchymal transition (EMT) induction by increasing cell proliferation, migration and invasion (By similarity). Involved in chemokine CXCL12-induced endothelial cell migration through the control of CXCR4 expression (PubMed:18187037). Plays a role in the gene regulatory network essential for epidermal keratinocyte terminal differentiation (By similarity). Essential developmental transcriptional factor required for mesoderm-derived tissues formation, such as the somites, skin, bone and cartilage (PubMed:10395790, PubMed:10479458, PubMed:10704385, PubMed:11562355, PubMed:15196959, PubMed:9106663). Positively regulates CXCL12 and stem cell factor expression in bone marrow mesenchymal progenitor cells, and hence plays a role in the development and maintenance of mesenchymal niches for haematopoietic stem and progenitor cells (HSPC) (PubMed:24590069). Plays a role in corneal transparency by preventing both blood vessel and lymphatic vessel growth during embryonic development in a VEGF-dependent manner (PubMed:22171010). May function as a tumor suppressor (By similarity).</text>
</comment>
<comment type="subunit">
    <text evidence="1 15 16">Monomer. Interacts with C1QBP (By similarity). Interacts (via N-terminus) with GLI2 (via C-terminal internal region); this interaction is direct and increases GLI2 DNA-binding and transcriptional activity through a smoothened (SMO)-independent Hedgehog (Hh) signaling pathway (PubMed:25808752, PubMed:26565916). Interacts (via C-terminus domain) with PITX2 (via homeobox domain) (By similarity). Interacts with FLNA and PBX1 (By similarity).</text>
</comment>
<comment type="subcellular location">
    <subcellularLocation>
        <location evidence="7 13 15">Nucleus</location>
    </subcellularLocation>
    <text evidence="1 15">Colocalizes with PITX2 in the nucleus at subnuclear chromatin regions. Colocalizes with CBX5 to a heterochromatin-rich region of the nucleus (By similarity). Colocalizes with GLI2 in the nucleus (PubMed:25808752).</text>
</comment>
<comment type="tissue specificity">
    <text evidence="10 11 14 15 17 20">Expressed in glomerular epithelial cells, the podocytes (PubMed:28223138). Expressed in a population of adipo-osteogenic progenitor cells, termed CXCL12-abundant reticular (CAR) cells (at protein level) (PubMed:24590069). Expressed in many embryonic tissues, including prechondrogenic mesenchyme, periocular mesenchyme, meninges, endothelial cells and kidney (PubMed:9767123). Detected in adult brain, heart, kidney, adrenal gland, lung and testis, with lower levels in stomach, spleen and thymus (PubMed:9767123). Expressed in endothelial cells (PubMed:18187037). Expressed in the mesenchyme adjacent to the developing cerebellum (PubMed:19668217). Expressed in the sternum and rib cartilage (PubMed:25808752). Expressed in growth plate chondrocytes (PubMed:25808752).</text>
</comment>
<comment type="developmental stage">
    <text evidence="4 5 6 7 9 14 15 18">Expressed in the anterior presomitic mesoderm (PSM) and somites at 9.5 dpc. Expressed in endothelial and smooth muscle cells of blood vessels at 9.5 dpc (PubMed:11562355). Expressed in growth plate chondrocytes and perichondrial cells at 13.5 dpc (at protein level) (PubMed:25808752). Expressed in non-notochordal mesoderm surrounding the node and notochord at 7.5 dpc (PubMed:9106663). Expressed in anterior presomitic mesoderm adjacent to somites, in the somites, and in the cephalic mesoderm at 8.5 and 9.5 dpc (PubMed:9106663). Detected weakly in yolk sac at 9.5 dpc (PubMed:11562355). Expressed in presumptive intermediate mesoderm, as well as in the presomitic mesoderm and somites at 8.5 and 9.5 dpc (PubMed:10704385). Expressed in the metanephric mesenchyme of the kidney at 10.5 and 12.5 dpc (PubMed:10704385). Expressed during the developing cardiovascular system (PubMed:10479458). Expressed in the branchial arches and mesenchymal cells surrounding the eye at 10.5 dpc (PubMed:9106663). Expressed in nasal processes, corneal mesenchyme cells, branchial arches, blood vessels and endocardium at 11.5 dpc (PubMed:10395790, PubMed:9106663). Expressed in cells located in the presumptive anterior segment that are fated to contribute to the corneal endothelium or stroma, as well as within cells located at the periphery of the optic cup at 11.5 dpc (PubMed:16449236). Expressed in periocular mesenchyme cells at 11.5, 12.5 and 16.5 dpc (PubMed:10395790, PubMed:16449236). Expressed in developing limb buds at 12.5 dpc (PubMed:25808752). Expressed in chondrocytes at 15 dpc (PubMed:25808752). Expressed in the trabecular meshwork cells, the sclera, the conjunctival epithelium and the corneal epithelium at 16.5 dpc (PubMed:10395790). Strongly expressed in adipo-osteogenic progenitor cells (CXCL12-abundant reticular (CAR) cells) at 16.5 dpc and at birth (PubMed:24590069).</text>
</comment>
<comment type="PTM">
    <text evidence="1 13">Phosphorylated (PubMed:22493429). Phosphorylated on Ser-274 in response to epidermal growth factor (EGF) in a ERK1/2 MAPK-dependent signaling pathway; phosphorylation contributes to its protein stability and transcriptional regulatory activity (By similarity).</text>
</comment>
<comment type="PTM">
    <text evidence="13">Sumoylated preferentially with SUMO2 or SUMO3. Desumoylated by SENP2.</text>
</comment>
<comment type="PTM">
    <text evidence="1">Ubiquitinated, leading to its proteasomal degradation.</text>
</comment>
<comment type="disruption phenotype">
    <text evidence="4 5 6 7 8 10 11 12 14 15 17 18 19">Embryos die pre- and perinatally with haemorrhagic hydrocephalus and calvarial defects, beginning at 13.5 dpc (PubMed:10479458, PubMed:19668217, PubMed:9635428). Mutants that survive to later stages exhibit multiple craniofacial and vertebral defects characterized by disorganized rib fusion, absence of chondrocytes proliferation and ossification (PubMed:25808752, PubMed:9106663). Show abnormal cerebellar development with an enlarged fourth ventricle roof plate at 12.5 dpc and a disorganized cerebellar rhombic lip (PubMed:19668217). Show eye formation abnormalities: the lens remains attached to the cornea, both the anterior chamber and the corneal endothelium are absent, the corneal stroma is thicker, the arrangement of mesenchyme cells are disorganized and the corneal endothelial cells do not differentiate (PubMed:10395790). Show cardiovascular defects including persistent truncus arteriosus, ventricular septal defect, coarctation of the aortic arch, and aortic and pulmonary valve dysplasia (PubMed:10479458). Show abnormal kidney and ureter development, including duplex kidneys connecting to double ureters (PubMed:10704385). Show a decrease in hedgehog-induced genes expression levels involved in endochondral ossification (PubMed:25808752). Double knockout of FOXC1 and FOXC2 genes in mice embryos die around 8-9.5 dpc and show profound abnormalities in the first and second branchial arches, the early remodeling of blood vessels, a complete absence of segmented paraxial mesoderm, and the presence of ectopic and disorganized mesonephric kidney tubules (PubMed:11562355, PubMed:15196959). Mice with conditional knockout of both FOXC1 and FOXC2 genes in adult mice show renal tubular damage with protein reabsorption droplets, tubular dilation and proteinaceous casts and show also altered expression levels for several genes involved in the differentiation of podocytes (PubMed:28223138). Display also podocyte degeneration characterized with microvillous transformation, podocyte foot process effacement and irregular thickness of the glomerular basement membrane (PubMed:28223138). Podocyte-cell-specific conditional knockout of both FOXC1 and FOXC2 genes in adult mice show reabsorption droplets, tubular dilation and proteinaceous casts (PubMed:28223138). Endothelial-specific conditional knockout mice show a significant reduction in CXCR4 expression as well as in chemokine CXCL12-induced endothelial cell migration (PubMed:18187037). Limb bud mesenchymal-specific conditional knockout mice display strong reduction in haematopoietic stem and progenitor cells, the presence of adipocytes in marrow cavities (yellow adipose marrow) instead of CXCL12-abundant reticular (CAR) cells and die around 6 weeks of age with haemorrhagic hydrocephalus and calvarial defects (PubMed:24590069). CAR cell-specific conditional knockout mice are viable and die without hydrocephalus defects, but show a reduction in haematopoietic stem and progenitor cells (HSPCs) and most marrow cavities are filled with adipocytes (PubMed:24590069). Adult widespread cell-specific conditional knockout mice show a reduction in haematopoietic stem and progenitor cells (HSPCs), with only occasional adipocytes present in marrow cavities (PubMed:24590069). Neural crest (NC)-specific conditional knockout mice die postnatally with hydrocephalus and craniofacial abnormalities comparable to those seen in conventional knockout mice; embryos display pupillary abnormalities, with impaired collagen formation in the corneal stroma and aberrant vessel growth in the normally avascular corneas (PubMed:22171010).</text>
</comment>
<accession>Q61572</accession>
<accession>O88409</accession>
<accession>Q61582</accession>
<accession>Q9QWR9</accession>
<evidence type="ECO:0000250" key="1">
    <source>
        <dbReference type="UniProtKB" id="Q12948"/>
    </source>
</evidence>
<evidence type="ECO:0000255" key="2">
    <source>
        <dbReference type="PROSITE-ProRule" id="PRU00089"/>
    </source>
</evidence>
<evidence type="ECO:0000256" key="3">
    <source>
        <dbReference type="SAM" id="MobiDB-lite"/>
    </source>
</evidence>
<evidence type="ECO:0000269" key="4">
    <source>
    </source>
</evidence>
<evidence type="ECO:0000269" key="5">
    <source>
    </source>
</evidence>
<evidence type="ECO:0000269" key="6">
    <source>
    </source>
</evidence>
<evidence type="ECO:0000269" key="7">
    <source>
    </source>
</evidence>
<evidence type="ECO:0000269" key="8">
    <source>
    </source>
</evidence>
<evidence type="ECO:0000269" key="9">
    <source>
    </source>
</evidence>
<evidence type="ECO:0000269" key="10">
    <source>
    </source>
</evidence>
<evidence type="ECO:0000269" key="11">
    <source>
    </source>
</evidence>
<evidence type="ECO:0000269" key="12">
    <source>
    </source>
</evidence>
<evidence type="ECO:0000269" key="13">
    <source>
    </source>
</evidence>
<evidence type="ECO:0000269" key="14">
    <source>
    </source>
</evidence>
<evidence type="ECO:0000269" key="15">
    <source>
    </source>
</evidence>
<evidence type="ECO:0000269" key="16">
    <source>
    </source>
</evidence>
<evidence type="ECO:0000269" key="17">
    <source>
    </source>
</evidence>
<evidence type="ECO:0000269" key="18">
    <source>
    </source>
</evidence>
<evidence type="ECO:0000269" key="19">
    <source>
    </source>
</evidence>
<evidence type="ECO:0000269" key="20">
    <source>
    </source>
</evidence>
<evidence type="ECO:0000305" key="21"/>
<evidence type="ECO:0007744" key="22">
    <source>
    </source>
</evidence>
<reference key="1">
    <citation type="journal article" date="1998" name="Cell">
        <title>The forkhead/winged helix gene Mf1 is disrupted in the pleiotropic mouse mutation congenital hydrocephalus.</title>
        <authorList>
            <person name="Kume T."/>
            <person name="Deng K.Y."/>
            <person name="Winfrey V."/>
            <person name="Gould D.B."/>
            <person name="Walter M.A."/>
            <person name="Hogan B.L.M."/>
        </authorList>
    </citation>
    <scope>NUCLEOTIDE SEQUENCE [MRNA]</scope>
    <scope>FUNCTION</scope>
    <scope>DISRUPTION PHENOTYPE</scope>
</reference>
<reference key="2">
    <citation type="journal article" date="1998" name="Gene">
        <title>The mouse Fkh1/Mf1 gene: cDNA sequence, chromosomal localization and expression in adult tissues.</title>
        <authorList>
            <person name="Hiemisch H."/>
            <person name="Schutz G."/>
            <person name="Kaestner K.H."/>
        </authorList>
    </citation>
    <scope>NUCLEOTIDE SEQUENCE [MRNA]</scope>
    <scope>TISSUE SPECIFICITY</scope>
    <source>
        <tissue>Embryo</tissue>
    </source>
</reference>
<reference key="3">
    <citation type="journal article" date="2005" name="Science">
        <title>The transcriptional landscape of the mammalian genome.</title>
        <authorList>
            <person name="Carninci P."/>
            <person name="Kasukawa T."/>
            <person name="Katayama S."/>
            <person name="Gough J."/>
            <person name="Frith M.C."/>
            <person name="Maeda N."/>
            <person name="Oyama R."/>
            <person name="Ravasi T."/>
            <person name="Lenhard B."/>
            <person name="Wells C."/>
            <person name="Kodzius R."/>
            <person name="Shimokawa K."/>
            <person name="Bajic V.B."/>
            <person name="Brenner S.E."/>
            <person name="Batalov S."/>
            <person name="Forrest A.R."/>
            <person name="Zavolan M."/>
            <person name="Davis M.J."/>
            <person name="Wilming L.G."/>
            <person name="Aidinis V."/>
            <person name="Allen J.E."/>
            <person name="Ambesi-Impiombato A."/>
            <person name="Apweiler R."/>
            <person name="Aturaliya R.N."/>
            <person name="Bailey T.L."/>
            <person name="Bansal M."/>
            <person name="Baxter L."/>
            <person name="Beisel K.W."/>
            <person name="Bersano T."/>
            <person name="Bono H."/>
            <person name="Chalk A.M."/>
            <person name="Chiu K.P."/>
            <person name="Choudhary V."/>
            <person name="Christoffels A."/>
            <person name="Clutterbuck D.R."/>
            <person name="Crowe M.L."/>
            <person name="Dalla E."/>
            <person name="Dalrymple B.P."/>
            <person name="de Bono B."/>
            <person name="Della Gatta G."/>
            <person name="di Bernardo D."/>
            <person name="Down T."/>
            <person name="Engstrom P."/>
            <person name="Fagiolini M."/>
            <person name="Faulkner G."/>
            <person name="Fletcher C.F."/>
            <person name="Fukushima T."/>
            <person name="Furuno M."/>
            <person name="Futaki S."/>
            <person name="Gariboldi M."/>
            <person name="Georgii-Hemming P."/>
            <person name="Gingeras T.R."/>
            <person name="Gojobori T."/>
            <person name="Green R.E."/>
            <person name="Gustincich S."/>
            <person name="Harbers M."/>
            <person name="Hayashi Y."/>
            <person name="Hensch T.K."/>
            <person name="Hirokawa N."/>
            <person name="Hill D."/>
            <person name="Huminiecki L."/>
            <person name="Iacono M."/>
            <person name="Ikeo K."/>
            <person name="Iwama A."/>
            <person name="Ishikawa T."/>
            <person name="Jakt M."/>
            <person name="Kanapin A."/>
            <person name="Katoh M."/>
            <person name="Kawasawa Y."/>
            <person name="Kelso J."/>
            <person name="Kitamura H."/>
            <person name="Kitano H."/>
            <person name="Kollias G."/>
            <person name="Krishnan S.P."/>
            <person name="Kruger A."/>
            <person name="Kummerfeld S.K."/>
            <person name="Kurochkin I.V."/>
            <person name="Lareau L.F."/>
            <person name="Lazarevic D."/>
            <person name="Lipovich L."/>
            <person name="Liu J."/>
            <person name="Liuni S."/>
            <person name="McWilliam S."/>
            <person name="Madan Babu M."/>
            <person name="Madera M."/>
            <person name="Marchionni L."/>
            <person name="Matsuda H."/>
            <person name="Matsuzawa S."/>
            <person name="Miki H."/>
            <person name="Mignone F."/>
            <person name="Miyake S."/>
            <person name="Morris K."/>
            <person name="Mottagui-Tabar S."/>
            <person name="Mulder N."/>
            <person name="Nakano N."/>
            <person name="Nakauchi H."/>
            <person name="Ng P."/>
            <person name="Nilsson R."/>
            <person name="Nishiguchi S."/>
            <person name="Nishikawa S."/>
            <person name="Nori F."/>
            <person name="Ohara O."/>
            <person name="Okazaki Y."/>
            <person name="Orlando V."/>
            <person name="Pang K.C."/>
            <person name="Pavan W.J."/>
            <person name="Pavesi G."/>
            <person name="Pesole G."/>
            <person name="Petrovsky N."/>
            <person name="Piazza S."/>
            <person name="Reed J."/>
            <person name="Reid J.F."/>
            <person name="Ring B.Z."/>
            <person name="Ringwald M."/>
            <person name="Rost B."/>
            <person name="Ruan Y."/>
            <person name="Salzberg S.L."/>
            <person name="Sandelin A."/>
            <person name="Schneider C."/>
            <person name="Schoenbach C."/>
            <person name="Sekiguchi K."/>
            <person name="Semple C.A."/>
            <person name="Seno S."/>
            <person name="Sessa L."/>
            <person name="Sheng Y."/>
            <person name="Shibata Y."/>
            <person name="Shimada H."/>
            <person name="Shimada K."/>
            <person name="Silva D."/>
            <person name="Sinclair B."/>
            <person name="Sperling S."/>
            <person name="Stupka E."/>
            <person name="Sugiura K."/>
            <person name="Sultana R."/>
            <person name="Takenaka Y."/>
            <person name="Taki K."/>
            <person name="Tammoja K."/>
            <person name="Tan S.L."/>
            <person name="Tang S."/>
            <person name="Taylor M.S."/>
            <person name="Tegner J."/>
            <person name="Teichmann S.A."/>
            <person name="Ueda H.R."/>
            <person name="van Nimwegen E."/>
            <person name="Verardo R."/>
            <person name="Wei C.L."/>
            <person name="Yagi K."/>
            <person name="Yamanishi H."/>
            <person name="Zabarovsky E."/>
            <person name="Zhu S."/>
            <person name="Zimmer A."/>
            <person name="Hide W."/>
            <person name="Bult C."/>
            <person name="Grimmond S.M."/>
            <person name="Teasdale R.D."/>
            <person name="Liu E.T."/>
            <person name="Brusic V."/>
            <person name="Quackenbush J."/>
            <person name="Wahlestedt C."/>
            <person name="Mattick J.S."/>
            <person name="Hume D.A."/>
            <person name="Kai C."/>
            <person name="Sasaki D."/>
            <person name="Tomaru Y."/>
            <person name="Fukuda S."/>
            <person name="Kanamori-Katayama M."/>
            <person name="Suzuki M."/>
            <person name="Aoki J."/>
            <person name="Arakawa T."/>
            <person name="Iida J."/>
            <person name="Imamura K."/>
            <person name="Itoh M."/>
            <person name="Kato T."/>
            <person name="Kawaji H."/>
            <person name="Kawagashira N."/>
            <person name="Kawashima T."/>
            <person name="Kojima M."/>
            <person name="Kondo S."/>
            <person name="Konno H."/>
            <person name="Nakano K."/>
            <person name="Ninomiya N."/>
            <person name="Nishio T."/>
            <person name="Okada M."/>
            <person name="Plessy C."/>
            <person name="Shibata K."/>
            <person name="Shiraki T."/>
            <person name="Suzuki S."/>
            <person name="Tagami M."/>
            <person name="Waki K."/>
            <person name="Watahiki A."/>
            <person name="Okamura-Oho Y."/>
            <person name="Suzuki H."/>
            <person name="Kawai J."/>
            <person name="Hayashizaki Y."/>
        </authorList>
    </citation>
    <scope>NUCLEOTIDE SEQUENCE [LARGE SCALE MRNA]</scope>
    <source>
        <strain>C57BL/6J</strain>
        <tissue>Diencephalon</tissue>
    </source>
</reference>
<reference key="4">
    <citation type="journal article" date="2004" name="Genome Res.">
        <title>The status, quality, and expansion of the NIH full-length cDNA project: the Mammalian Gene Collection (MGC).</title>
        <authorList>
            <consortium name="The MGC Project Team"/>
        </authorList>
    </citation>
    <scope>NUCLEOTIDE SEQUENCE [LARGE SCALE MRNA]</scope>
    <source>
        <strain>C57BL/6J</strain>
        <tissue>Embryonic brain</tissue>
    </source>
</reference>
<reference key="5">
    <citation type="journal article" date="1993" name="Proc. Natl. Acad. Sci. U.S.A.">
        <title>Six members of the mouse forkhead gene family are developmentally regulated.</title>
        <authorList>
            <person name="Kaestner K.H."/>
            <person name="Lee K.H."/>
            <person name="Schloendorff J."/>
            <person name="Hiemisch H."/>
            <person name="Monaghan A.P."/>
            <person name="Schuetz G."/>
        </authorList>
    </citation>
    <scope>NUCLEOTIDE SEQUENCE [GENOMIC DNA] OF 69-179</scope>
    <source>
        <strain>129</strain>
    </source>
</reference>
<reference key="6">
    <citation type="journal article" date="1993" name="Development">
        <title>Differential expression of multiple fork head related genes during gastrulation and axial pattern formation in the mouse embryo.</title>
        <authorList>
            <person name="Sasaki H."/>
            <person name="Hogan B.L."/>
        </authorList>
    </citation>
    <scope>NUCLEOTIDE SEQUENCE [MRNA] OF 71-187</scope>
</reference>
<reference key="7">
    <citation type="journal article" date="1997" name="Genes Dev.">
        <title>The winged helix transcription factor MFH1 is required for proliferation and patterning of paraxial mesoderm in the mouse embryo.</title>
        <authorList>
            <person name="Winnier G.E."/>
            <person name="Hargett L."/>
            <person name="Hogan B.L."/>
        </authorList>
    </citation>
    <scope>FUNCTION</scope>
    <scope>DEVELOPMENTAL STAGE</scope>
    <scope>DISRUPTION PHENOTYPE</scope>
</reference>
<reference key="8">
    <citation type="journal article" date="1999" name="Dev. Biol.">
        <title>The forkhead/winged-helix gene, Mf1, is necessary for the normal development of the cornea and formation of the anterior chamber in the mouse eye.</title>
        <authorList>
            <person name="Kidson S.H."/>
            <person name="Kume T."/>
            <person name="Deng K."/>
            <person name="Winfrey V."/>
            <person name="Hogan B.L."/>
        </authorList>
    </citation>
    <scope>FUNCTION</scope>
    <scope>DEVELOPMENTAL STAGE</scope>
    <scope>DISRUPTION PHENOTYPE</scope>
</reference>
<reference key="9">
    <citation type="journal article" date="1999" name="Dev. Biol.">
        <title>Roles for the winged helix transcription factors MF1 and MFH1 in cardiovascular development revealed by nonallelic noncomplementation of null alleles.</title>
        <authorList>
            <person name="Winnier G.E."/>
            <person name="Kume T."/>
            <person name="Deng K."/>
            <person name="Rogers R."/>
            <person name="Bundy J."/>
            <person name="Raines C."/>
            <person name="Walter M.A."/>
            <person name="Hogan B.L."/>
            <person name="Conway S.J."/>
        </authorList>
    </citation>
    <scope>FUNCTION</scope>
    <scope>DEVELOPMENTAL STAGE</scope>
    <scope>DISRUPTION PHENOTYPE</scope>
</reference>
<reference key="10">
    <citation type="journal article" date="2000" name="Development">
        <title>Murine forkhead/winged helix genes Foxc1 (Mf1) and Foxc2 (Mfh1) are required for the early organogenesis of the kidney and urinary tract.</title>
        <authorList>
            <person name="Kume T."/>
            <person name="Deng K."/>
            <person name="Hogan B.L."/>
        </authorList>
    </citation>
    <scope>FUNCTION</scope>
    <scope>DEVELOPMENTAL STAGE</scope>
    <scope>DISRUPTION PHENOTYPE</scope>
</reference>
<reference key="11">
    <citation type="journal article" date="2001" name="Genes Dev.">
        <title>The murine winged helix transcription factors, Foxc1 and Foxc2, are both required for cardiovascular development and somitogenesis.</title>
        <authorList>
            <person name="Kume T."/>
            <person name="Jiang H."/>
            <person name="Topczewska J.M."/>
            <person name="Hogan B.L."/>
        </authorList>
    </citation>
    <scope>FUNCTION</scope>
    <scope>DISRUPTION PHENOTYPE</scope>
    <scope>DEVELOPMENTAL STAGE</scope>
    <scope>SUBCELLULAR LOCATION</scope>
</reference>
<reference key="12">
    <citation type="journal article" date="2004" name="Dev. Biol.">
        <title>The forkhead genes, Foxc1 and Foxc2, regulate paraxial versus intermediate mesoderm cell fate.</title>
        <authorList>
            <person name="Wilm B."/>
            <person name="James R.G."/>
            <person name="Schultheiss T.M."/>
            <person name="Hogan B.L."/>
        </authorList>
    </citation>
    <scope>FUNCTION</scope>
    <scope>DISRUPTION PHENOTYPE</scope>
    <scope>CONDITIONAL KNOCKOUT</scope>
</reference>
<reference key="13">
    <citation type="journal article" date="2006" name="Hum. Mol. Genet.">
        <title>Functional interactions between FOXC1 and PITX2 underlie the sensitivity to FOXC1 gene dose in Axenfeld-Rieger syndrome and anterior segment dysgenesis.</title>
        <authorList>
            <person name="Berry F.B."/>
            <person name="Lines M.A."/>
            <person name="Oas J.M."/>
            <person name="Footz T."/>
            <person name="Underhill D.A."/>
            <person name="Gage P.J."/>
            <person name="Walter M.A."/>
        </authorList>
    </citation>
    <scope>DEVELOPMENTAL STAGE</scope>
</reference>
<reference key="14">
    <citation type="journal article" date="2008" name="Biochem. Biophys. Res. Commun.">
        <title>Forkhead transcription factors regulate expression of the chemokine receptor CXCR4 in endothelial cells and CXCL12-induced cell migration.</title>
        <authorList>
            <person name="Hayashi H."/>
            <person name="Kume T."/>
        </authorList>
    </citation>
    <scope>FUNCTION</scope>
    <scope>TISSUE SPECIFICITY</scope>
    <scope>DISRUPTION PHENOTYPE</scope>
    <scope>CONDITIONAL KNOCKOUT</scope>
</reference>
<reference key="15">
    <citation type="journal article" date="2009" name="Nat. Genet.">
        <title>FOXC1 is required for normal cerebellar development and is a major contributor to chromosome 6p25.3 Dandy-Walker malformation.</title>
        <authorList>
            <person name="Aldinger K.A."/>
            <person name="Lehmann O.J."/>
            <person name="Hudgins L."/>
            <person name="Chizhikov V.V."/>
            <person name="Bassuk A.G."/>
            <person name="Ades L.C."/>
            <person name="Krantz I.D."/>
            <person name="Dobyns W.B."/>
            <person name="Millen K.J."/>
        </authorList>
    </citation>
    <scope>FUNCTION</scope>
    <scope>DISRUPTION PHENOTYPE</scope>
    <scope>TISSUE SPECIFICITY</scope>
</reference>
<reference key="16">
    <citation type="journal article" date="2010" name="Cell">
        <title>A tissue-specific atlas of mouse protein phosphorylation and expression.</title>
        <authorList>
            <person name="Huttlin E.L."/>
            <person name="Jedrychowski M.P."/>
            <person name="Elias J.E."/>
            <person name="Goswami T."/>
            <person name="Rad R."/>
            <person name="Beausoleil S.A."/>
            <person name="Villen J."/>
            <person name="Haas W."/>
            <person name="Sowa M.E."/>
            <person name="Gygi S.P."/>
        </authorList>
    </citation>
    <scope>PHOSPHORYLATION [LARGE SCALE ANALYSIS] AT SER-237 AND SER-243</scope>
    <scope>IDENTIFICATION BY MASS SPECTROMETRY [LARGE SCALE ANALYSIS]</scope>
    <source>
        <tissue>Kidney</tissue>
    </source>
</reference>
<reference key="17">
    <citation type="journal article" date="2012" name="J. Biol. Chem.">
        <title>Small ubiquitin-like modifier (SUMO) modification mediates function of the inhibitory domains of developmental regulators FOXC1 and FOXC2.</title>
        <authorList>
            <person name="Danciu T.E."/>
            <person name="Chupreta S."/>
            <person name="Cruz O."/>
            <person name="Fox J.E."/>
            <person name="Whitman M."/>
            <person name="Iniguez-Lluhi J.A."/>
        </authorList>
    </citation>
    <scope>FUNCTION</scope>
    <scope>SUMOYLATION</scope>
    <scope>PHOSPHORYLATION AT SER-237; SER-243; SER-320 AND SER-521</scope>
    <scope>SUBCELLULAR LOCATION</scope>
    <scope>MUTAGENESIS OF 6-SER--SER-9; LYS-229; SER-237; SER-243; LYS-258; SER-320 AND SER-521</scope>
</reference>
<reference key="18">
    <citation type="journal article" date="2012" name="Proc. Natl. Acad. Sci. U.S.A.">
        <title>Forkhead box transcription factor FoxC1 preserves corneal transparency by regulating vascular growth.</title>
        <authorList>
            <person name="Seo S."/>
            <person name="Singh H.P."/>
            <person name="Lacal P.M."/>
            <person name="Sasman A."/>
            <person name="Fatima A."/>
            <person name="Liu T."/>
            <person name="Schultz K.M."/>
            <person name="Losordo D.W."/>
            <person name="Lehmann O.J."/>
            <person name="Kume T."/>
        </authorList>
    </citation>
    <scope>FUNCTION</scope>
    <scope>DISRUPTION PHENOTYPE</scope>
    <scope>CONDITIONAL KNOCKOUT</scope>
</reference>
<reference key="19">
    <citation type="journal article" date="2014" name="Nature">
        <title>Foxc1 is a critical regulator of haematopoietic stem/progenitor cell niche formation.</title>
        <authorList>
            <person name="Omatsu Y."/>
            <person name="Seike M."/>
            <person name="Sugiyama T."/>
            <person name="Kume T."/>
            <person name="Nagasawa T."/>
        </authorList>
    </citation>
    <scope>FUNCTION</scope>
    <scope>DISRUPTION PHENOTYPE</scope>
    <scope>CONDITIONAL KNOCKOUT</scope>
    <scope>TISSUE SPECIFICITY</scope>
    <scope>DEVELOPMENTAL STAGE</scope>
</reference>
<reference key="20">
    <citation type="journal article" date="2015" name="Cell Rep.">
        <title>FOXC1 activates smoothened-independent Hedgehog signaling in basal-like breast cancer.</title>
        <authorList>
            <person name="Han B."/>
            <person name="Qu Y."/>
            <person name="Jin Y."/>
            <person name="Yu Y."/>
            <person name="Deng N."/>
            <person name="Wawrowsky K."/>
            <person name="Zhang X."/>
            <person name="Li N."/>
            <person name="Bose S."/>
            <person name="Wang Q."/>
            <person name="Sakkiah S."/>
            <person name="Abrol R."/>
            <person name="Jensen T.W."/>
            <person name="Berman B.P."/>
            <person name="Tanaka H."/>
            <person name="Johnson J."/>
            <person name="Gao B."/>
            <person name="Hao J."/>
            <person name="Liu Z."/>
            <person name="Buttyan R."/>
            <person name="Ray P.S."/>
            <person name="Hung M.C."/>
            <person name="Giuliano A.E."/>
            <person name="Cui X."/>
        </authorList>
    </citation>
    <scope>INTERACTION WITH GLI2</scope>
</reference>
<reference key="21">
    <citation type="journal article" date="2015" name="Nat. Commun.">
        <title>The transcription factor Foxc1 is necessary for Ihh-Gli2-regulated endochondral ossification.</title>
        <authorList>
            <person name="Yoshida M."/>
            <person name="Hata K."/>
            <person name="Takashima R."/>
            <person name="Ono K."/>
            <person name="Nakamura E."/>
            <person name="Takahata Y."/>
            <person name="Murakami T."/>
            <person name="Iseki S."/>
            <person name="Takano-Yamamoto T."/>
            <person name="Nishimura R."/>
            <person name="Yoneda T."/>
        </authorList>
    </citation>
    <scope>FUNCTION</scope>
    <scope>INTERACTION WITH GLI2</scope>
    <scope>SUBCELLULAR LOCATION</scope>
    <scope>DISRUPTION PHENOTYPE</scope>
    <scope>TISSUE SPECIFICITY</scope>
    <scope>DEVELOPMENTAL STAGE</scope>
    <scope>MUTAGENESIS OF PHE-112</scope>
</reference>
<reference key="22">
    <citation type="journal article" date="2017" name="Exp. Cell Res.">
        <title>Foxc1 and Foxc2 are necessary to maintain glomerular podocytes.</title>
        <authorList>
            <person name="Motojima M."/>
            <person name="Kume T."/>
            <person name="Matsusaka T."/>
        </authorList>
    </citation>
    <scope>FUNCTION</scope>
    <scope>DISRUPTION PHENOTYPE</scope>
    <scope>CONDITIONAL KNOCKOUTS</scope>
    <scope>TISSUE SPECIFICITY</scope>
</reference>
<name>FOXC1_MOUSE</name>
<gene>
    <name type="primary">Foxc1</name>
    <name type="synonym">Fkh1</name>
    <name type="synonym">Fkhl7</name>
    <name type="synonym">Freac3</name>
    <name type="synonym">Mf1</name>
</gene>
<keyword id="KW-0010">Activator</keyword>
<keyword id="KW-0037">Angiogenesis</keyword>
<keyword id="KW-0217">Developmental protein</keyword>
<keyword id="KW-0238">DNA-binding</keyword>
<keyword id="KW-0539">Nucleus</keyword>
<keyword id="KW-0597">Phosphoprotein</keyword>
<keyword id="KW-1185">Reference proteome</keyword>
<keyword id="KW-0678">Repressor</keyword>
<keyword id="KW-0804">Transcription</keyword>
<keyword id="KW-0805">Transcription regulation</keyword>
<keyword id="KW-0832">Ubl conjugation</keyword>
<protein>
    <recommendedName>
        <fullName>Forkhead box protein C1</fullName>
    </recommendedName>
    <alternativeName>
        <fullName>Forkhead-related protein FKHL7</fullName>
    </alternativeName>
    <alternativeName>
        <fullName>Forkhead-related transcription factor 3</fullName>
        <shortName>FREAC-3</shortName>
    </alternativeName>
    <alternativeName>
        <fullName>Mesoderm/mesenchyme forkhead 1</fullName>
        <shortName>MF-1</shortName>
    </alternativeName>
    <alternativeName>
        <fullName>Transcription factor FKH-1</fullName>
    </alternativeName>
</protein>